<proteinExistence type="inferred from homology"/>
<feature type="chain" id="PRO_1000131243" description="UPF0250 protein YbeD">
    <location>
        <begin position="1"/>
        <end position="87"/>
    </location>
</feature>
<organism>
    <name type="scientific">Escherichia coli O17:K52:H18 (strain UMN026 / ExPEC)</name>
    <dbReference type="NCBI Taxonomy" id="585056"/>
    <lineage>
        <taxon>Bacteria</taxon>
        <taxon>Pseudomonadati</taxon>
        <taxon>Pseudomonadota</taxon>
        <taxon>Gammaproteobacteria</taxon>
        <taxon>Enterobacterales</taxon>
        <taxon>Enterobacteriaceae</taxon>
        <taxon>Escherichia</taxon>
    </lineage>
</organism>
<reference key="1">
    <citation type="journal article" date="2009" name="PLoS Genet.">
        <title>Organised genome dynamics in the Escherichia coli species results in highly diverse adaptive paths.</title>
        <authorList>
            <person name="Touchon M."/>
            <person name="Hoede C."/>
            <person name="Tenaillon O."/>
            <person name="Barbe V."/>
            <person name="Baeriswyl S."/>
            <person name="Bidet P."/>
            <person name="Bingen E."/>
            <person name="Bonacorsi S."/>
            <person name="Bouchier C."/>
            <person name="Bouvet O."/>
            <person name="Calteau A."/>
            <person name="Chiapello H."/>
            <person name="Clermont O."/>
            <person name="Cruveiller S."/>
            <person name="Danchin A."/>
            <person name="Diard M."/>
            <person name="Dossat C."/>
            <person name="Karoui M.E."/>
            <person name="Frapy E."/>
            <person name="Garry L."/>
            <person name="Ghigo J.M."/>
            <person name="Gilles A.M."/>
            <person name="Johnson J."/>
            <person name="Le Bouguenec C."/>
            <person name="Lescat M."/>
            <person name="Mangenot S."/>
            <person name="Martinez-Jehanne V."/>
            <person name="Matic I."/>
            <person name="Nassif X."/>
            <person name="Oztas S."/>
            <person name="Petit M.A."/>
            <person name="Pichon C."/>
            <person name="Rouy Z."/>
            <person name="Ruf C.S."/>
            <person name="Schneider D."/>
            <person name="Tourret J."/>
            <person name="Vacherie B."/>
            <person name="Vallenet D."/>
            <person name="Medigue C."/>
            <person name="Rocha E.P.C."/>
            <person name="Denamur E."/>
        </authorList>
    </citation>
    <scope>NUCLEOTIDE SEQUENCE [LARGE SCALE GENOMIC DNA]</scope>
    <source>
        <strain>UMN026 / ExPEC</strain>
    </source>
</reference>
<comment type="similarity">
    <text evidence="1">Belongs to the UPF0250 family.</text>
</comment>
<protein>
    <recommendedName>
        <fullName evidence="1">UPF0250 protein YbeD</fullName>
    </recommendedName>
</protein>
<name>YBED_ECOLU</name>
<sequence length="87" mass="9827">MKTKLNELLEFPTPFTYKVMGQALPELVDQVVEVVQRHAPGDYTPTVKPSSKGNYHSVSITINATHIEQVETLYEELGKIDIVRMVL</sequence>
<gene>
    <name evidence="1" type="primary">ybeD</name>
    <name type="ordered locus">ECUMN_0724</name>
</gene>
<evidence type="ECO:0000255" key="1">
    <source>
        <dbReference type="HAMAP-Rule" id="MF_00659"/>
    </source>
</evidence>
<dbReference type="EMBL" id="CU928163">
    <property type="protein sequence ID" value="CAR11938.1"/>
    <property type="molecule type" value="Genomic_DNA"/>
</dbReference>
<dbReference type="RefSeq" id="WP_000850550.1">
    <property type="nucleotide sequence ID" value="NC_011751.1"/>
</dbReference>
<dbReference type="RefSeq" id="YP_002411484.1">
    <property type="nucleotide sequence ID" value="NC_011751.1"/>
</dbReference>
<dbReference type="SMR" id="B7N9N7"/>
<dbReference type="STRING" id="585056.ECUMN_0724"/>
<dbReference type="GeneID" id="93776851"/>
<dbReference type="KEGG" id="eum:ECUMN_0724"/>
<dbReference type="PATRIC" id="fig|585056.7.peg.922"/>
<dbReference type="HOGENOM" id="CLU_161438_2_1_6"/>
<dbReference type="Proteomes" id="UP000007097">
    <property type="component" value="Chromosome"/>
</dbReference>
<dbReference type="GO" id="GO:0005829">
    <property type="term" value="C:cytosol"/>
    <property type="evidence" value="ECO:0007669"/>
    <property type="project" value="TreeGrafter"/>
</dbReference>
<dbReference type="FunFam" id="3.30.70.260:FF:000002">
    <property type="entry name" value="UPF0250 protein YbeD"/>
    <property type="match status" value="1"/>
</dbReference>
<dbReference type="Gene3D" id="3.30.70.260">
    <property type="match status" value="1"/>
</dbReference>
<dbReference type="HAMAP" id="MF_00659">
    <property type="entry name" value="UPF0250"/>
    <property type="match status" value="1"/>
</dbReference>
<dbReference type="InterPro" id="IPR007454">
    <property type="entry name" value="UPF0250_YbeD-like"/>
</dbReference>
<dbReference type="InterPro" id="IPR027471">
    <property type="entry name" value="YbeD-like_sf"/>
</dbReference>
<dbReference type="NCBIfam" id="NF003447">
    <property type="entry name" value="PRK04998.1"/>
    <property type="match status" value="1"/>
</dbReference>
<dbReference type="PANTHER" id="PTHR38036">
    <property type="entry name" value="UPF0250 PROTEIN YBED"/>
    <property type="match status" value="1"/>
</dbReference>
<dbReference type="PANTHER" id="PTHR38036:SF1">
    <property type="entry name" value="UPF0250 PROTEIN YBED"/>
    <property type="match status" value="1"/>
</dbReference>
<dbReference type="Pfam" id="PF04359">
    <property type="entry name" value="DUF493"/>
    <property type="match status" value="1"/>
</dbReference>
<dbReference type="SUPFAM" id="SSF117991">
    <property type="entry name" value="YbeD/HP0495-like"/>
    <property type="match status" value="1"/>
</dbReference>
<accession>B7N9N7</accession>